<reference key="1">
    <citation type="journal article" date="2006" name="Mol. Vis.">
        <title>Expression and sequences of genes encoding glutamate receptors and transporters in primate retina determined using 3'-end amplification polymerase chain reaction.</title>
        <authorList>
            <person name="Hanna M.C."/>
            <person name="Calkins D.J."/>
        </authorList>
    </citation>
    <scope>NUCLEOTIDE SEQUENCE [MRNA]</scope>
    <source>
        <tissue>Retina</tissue>
    </source>
</reference>
<protein>
    <recommendedName>
        <fullName evidence="4">Glutamate receptor 2</fullName>
        <shortName>GluR-2</shortName>
    </recommendedName>
    <alternativeName>
        <fullName>AMPA-selective glutamate receptor 2</fullName>
    </alternativeName>
    <alternativeName>
        <fullName>GluR-B</fullName>
    </alternativeName>
    <alternativeName>
        <fullName>GluR-K2</fullName>
    </alternativeName>
    <alternativeName>
        <fullName>Glutamate receptor ionotropic, AMPA 2</fullName>
    </alternativeName>
</protein>
<sequence>MQKIMHISVLLSPILWGLIFGVSSNSIQIGGLFPRGADQEYSAFRVGMVQFSTSEFRLTPHIDNLEVANSFAVTNAFCSQFSRGVYAIFGFYDKKSVNTITSFCGTLHVSFITPSFPTDGTHPFVIQMRPDLKGALLSLIEYYQWDKFAYLYDSDRGLSTLQAVLDSAAEKKWQVTAINVGNINNDKKDEMYRSLFQDLELKKERRVILDCERDKVNDIVDQVITIGKHVKGYHYIIANLGFTDGDLLKIQFGGANVSGFQIVDYDDSLVSKFIERWSTLEEKEYPGAHTTTIKYTSALTYDAVQVMTEAFRNLRKQRIEISRRGNAGDCLANPAVPWGQGVEIERALKQVQVEGLSGNIKFDQNGKRINYTINIMELKTNGPRKIGYWSEVDKMVVTLTELPSGNDTSGLENKTVVVTTILESPYVMMKKNHEMLEGNERYEGYCVDLAAEIAKHCGFKYKLTIVGDGKYGARDADTKIWNGMVGELVYGKADIAIAPLTITLVREEVIDFSKPFMSLGISIMIKKPQKSKPGVFSFLDPLAYEIWMCIVFAYIGVSVVLFLVSRFSPYEWHTEEFEDGRETQSSESTNEFGIFNSLWFSLGAFMRQGCDISPRSLSGRIVGGVWWFFTLIIISSYTANLAAFLTVERMVSPIESAEDLSKQTEIAYGTLDSGSTKEFFRRSKIAVFDKMWTYMRSAEPSVFVRTTAEGVARVRKSKGKYAYLLESTMNEYIEQRKPCDTMKVGGNLDSKGYGIATPKGSSLGNAVNLAVLKLNEQGLLDKLKNKWWYDKGECGSGGGDSKEKTSALSLSNVAGVFYILVGGLGLAMLVALIEFCYKSRAEAKRMKVAKNAQNINPSSSQNSQNFATYKEGYNVYGIESVKI</sequence>
<comment type="function">
    <text evidence="2 4">Ionotropic glutamate receptor that functions as a ligand-gated cation channel, gated by L-glutamate and glutamatergic agonists such as alpha-amino-3-hydroxy-5-methyl-4-isoxazolepropionic acid (AMPA), quisqualic acid, and kainic acid (By similarity). L-glutamate acts as an excitatory neurotransmitter at many synapses in the central nervous system and plays an important role in fast excitatory synaptic transmission (By similarity). Binding of the excitatory neurotransmitter L-glutamate induces a conformation change, leading to the opening of the cation channel, and thereby converts the chemical signal to an electrical impulse upon entry of monovalent and divalent cations such as sodium and calcium. The receptor then desensitizes rapidly and enters in a transient inactive state, characterized by the presence of bound agonist. In the presence of CACNG4 or CACNG7 or CACNG8, shows resensitization which is characterized by a delayed accumulation of current flux upon continued application of L-glutamate. Through complex formation with NSG1, GRIP1 and STX12 controls the intracellular fate of AMPAR and the endosomal sorting of the GRIA2 subunit toward recycling and membrane targeting (By similarity).</text>
</comment>
<comment type="catalytic activity">
    <reaction evidence="2">
        <text>Ca(2+)(in) = Ca(2+)(out)</text>
        <dbReference type="Rhea" id="RHEA:29671"/>
        <dbReference type="ChEBI" id="CHEBI:29108"/>
    </reaction>
</comment>
<comment type="catalytic activity">
    <reaction evidence="2">
        <text>Na(+)(in) = Na(+)(out)</text>
        <dbReference type="Rhea" id="RHEA:34963"/>
        <dbReference type="ChEBI" id="CHEBI:29101"/>
    </reaction>
</comment>
<comment type="subunit">
    <text evidence="2 3">Homotetramer or heterotetramer of pore-forming glutamate receptor subunits. Tetramers may be formed by the dimerization of dimers (By similarity). May interact with MPP4. Forms a ternary complex with GRIP1 and CSPG4. Interacts with ATAD1 in an ATP-dependent manner. ATAD1-catalyzed ATP hydrolysis disrupts binding to ATAD1 and to GRIP1 and leads to AMPAR complex disassembly. Interacts with GRIP1 and GRIP2 (By similarity). Interacts with NSF via its C-terminus (By similarity). Isoform 1, but not isoform 3, interacts with PICK1 (By similarity). Interacts with CACNG2 (By similarity). Interacts with GRIA1 and SYNDIG1 (By similarity). Part of a complex containing GRIA2, NSF and NAPA and/or NAPB (By similarity). Interacts with SNX27 (via PDZ domain); the interaction is required for recycling to the plasma membrane when endocytosed and prevent degradation in lysosomes (By similarity). Interacts with LRFN1. Found in a complex with GRIA1, GRIA3, GRIA4, CNIH2, CNIH3, CACNG2, CACNG3, CACNG4, CACNG5, CACNG7 and CACNG8. Interacts with CACNG5 (By similarity). Interacts with OLFM2. Interacts with AP4B1, AP4E1 and AP4M1; probably indirect it mediates the somatodendritic localization of GRIA2 in neurons (By similarity). Forms a complex with GRIP1, NSG1 and STX12; controls the intracellular fate of AMPAR and the endosomal sorting of the GRIA2 subunit toward recycling and membrane targeting. Interacts with IQSEC1; the interaction is required for ARF6 activation. Interacts (heterotetramer form) with CNIH2 and CNIH3; this interaction promotes expression at the plasma membrane and extensively modulates their gating properties by slowing deactivation and desensitization kinetics (By similarity).</text>
</comment>
<comment type="subcellular location">
    <subcellularLocation>
        <location evidence="4">Cell membrane</location>
        <topology evidence="4">Multi-pass membrane protein</topology>
    </subcellularLocation>
    <subcellularLocation>
        <location evidence="4">Postsynaptic cell membrane</location>
        <topology evidence="4">Multi-pass membrane protein</topology>
    </subcellularLocation>
    <subcellularLocation>
        <location evidence="3">Postsynaptic density membrane</location>
        <topology evidence="3">Multi-pass membrane protein</topology>
    </subcellularLocation>
    <text evidence="2 3">Interaction with CACNG2, CNIH2 and CNIH3 promotes cell surface expression (By similarity). Displays a somatodendritic localization and is excluded from axons in neurons (By similarity).</text>
</comment>
<comment type="domain">
    <text evidence="4">The M4 transmembrane segment mediates tetramerization and is required for cell surface expression.</text>
</comment>
<comment type="PTM">
    <text evidence="2">Phosphorylation at Tyr-876 is required for interaction with IQSEC1 and ARF6 activation, which in turn triggers AMPAR internalization for persistent synaptic depression.</text>
</comment>
<comment type="PTM">
    <text evidence="3">Palmitoylated. Depalmitoylated upon L-glutamate stimulation. ZDHHC3/GODZ specifically palmitoylates Cys-610, which leads to Golgi retention and decreased cell surface expression. In contrast, Cys-836 palmitoylation does not affect cell surface expression but regulates stimulation-dependent endocytosis.</text>
</comment>
<comment type="PTM">
    <text evidence="3">N-glycosylated.</text>
</comment>
<comment type="PTM">
    <text evidence="4">Ubiquitinated by RNF167, leading to its degradation.</text>
</comment>
<comment type="miscellaneous">
    <text evidence="2">The postsynaptic actions of L-glutamate are mediated by a variety of receptors that are named according to their selective agonists. This receptor binds AMPA (quisqualate) &gt; L-glutamate &gt; kainate.</text>
</comment>
<comment type="similarity">
    <text evidence="6">Belongs to the glutamate-gated ion channel (TC 1.A.10.1) family. GRIA2 subfamily.</text>
</comment>
<proteinExistence type="evidence at transcript level"/>
<gene>
    <name evidence="4" type="primary">GRIA2</name>
    <name evidence="2" type="synonym">GluA2</name>
    <name type="synonym">GLUR2</name>
</gene>
<dbReference type="EMBL" id="DQ159930">
    <property type="protein sequence ID" value="ABA47254.1"/>
    <property type="molecule type" value="mRNA"/>
</dbReference>
<dbReference type="RefSeq" id="NP_001306366.1">
    <property type="nucleotide sequence ID" value="NM_001319437.1"/>
</dbReference>
<dbReference type="SMR" id="Q38PU7"/>
<dbReference type="STRING" id="9541.ENSMFAP00000001039"/>
<dbReference type="GlyCosmos" id="Q38PU7">
    <property type="glycosylation" value="4 sites, No reported glycans"/>
</dbReference>
<dbReference type="eggNOG" id="KOG1054">
    <property type="taxonomic scope" value="Eukaryota"/>
</dbReference>
<dbReference type="Proteomes" id="UP000233100">
    <property type="component" value="Unplaced"/>
</dbReference>
<dbReference type="GO" id="GO:0032281">
    <property type="term" value="C:AMPA glutamate receptor complex"/>
    <property type="evidence" value="ECO:0000250"/>
    <property type="project" value="UniProtKB"/>
</dbReference>
<dbReference type="GO" id="GO:0005886">
    <property type="term" value="C:plasma membrane"/>
    <property type="evidence" value="ECO:0000250"/>
    <property type="project" value="UniProtKB"/>
</dbReference>
<dbReference type="GO" id="GO:0098839">
    <property type="term" value="C:postsynaptic density membrane"/>
    <property type="evidence" value="ECO:0007669"/>
    <property type="project" value="UniProtKB-SubCell"/>
</dbReference>
<dbReference type="GO" id="GO:0004971">
    <property type="term" value="F:AMPA glutamate receptor activity"/>
    <property type="evidence" value="ECO:0000250"/>
    <property type="project" value="UniProtKB"/>
</dbReference>
<dbReference type="GO" id="GO:0005230">
    <property type="term" value="F:extracellular ligand-gated monoatomic ion channel activity"/>
    <property type="evidence" value="ECO:0000250"/>
    <property type="project" value="UniProtKB"/>
</dbReference>
<dbReference type="GO" id="GO:0004970">
    <property type="term" value="F:glutamate-gated receptor activity"/>
    <property type="evidence" value="ECO:0000250"/>
    <property type="project" value="UniProtKB"/>
</dbReference>
<dbReference type="GO" id="GO:0015277">
    <property type="term" value="F:kainate selective glutamate receptor activity"/>
    <property type="evidence" value="ECO:0000250"/>
    <property type="project" value="UniProtKB"/>
</dbReference>
<dbReference type="GO" id="GO:0099094">
    <property type="term" value="F:ligand-gated monoatomic cation channel activity"/>
    <property type="evidence" value="ECO:0000250"/>
    <property type="project" value="UniProtKB"/>
</dbReference>
<dbReference type="GO" id="GO:0035235">
    <property type="term" value="P:ionotropic glutamate receptor signaling pathway"/>
    <property type="evidence" value="ECO:0000250"/>
    <property type="project" value="UniProtKB"/>
</dbReference>
<dbReference type="CDD" id="cd06389">
    <property type="entry name" value="PBP1_iGluR_AMPA_GluR2"/>
    <property type="match status" value="1"/>
</dbReference>
<dbReference type="CDD" id="cd13715">
    <property type="entry name" value="PBP2_iGluR_AMPA"/>
    <property type="match status" value="1"/>
</dbReference>
<dbReference type="FunFam" id="1.10.287.70:FF:000067">
    <property type="entry name" value="glutamate receptor 2 isoform X1"/>
    <property type="match status" value="1"/>
</dbReference>
<dbReference type="FunFam" id="1.10.287.70:FF:000099">
    <property type="entry name" value="glutamate receptor 2 isoform X1"/>
    <property type="match status" value="1"/>
</dbReference>
<dbReference type="FunFam" id="3.40.190.10:FF:000001">
    <property type="entry name" value="Glutamate receptor ionotropic, kainate 2"/>
    <property type="match status" value="1"/>
</dbReference>
<dbReference type="FunFam" id="3.40.50.2300:FF:000004">
    <property type="entry name" value="Glutamate receptor, ionotropic, AMPA 2"/>
    <property type="match status" value="1"/>
</dbReference>
<dbReference type="FunFam" id="3.40.190.10:FF:000666">
    <property type="entry name" value="Glutamate receptor, ionotropic, AMPA 2a"/>
    <property type="match status" value="1"/>
</dbReference>
<dbReference type="Gene3D" id="1.10.287.70">
    <property type="match status" value="2"/>
</dbReference>
<dbReference type="Gene3D" id="3.40.50.2300">
    <property type="match status" value="2"/>
</dbReference>
<dbReference type="Gene3D" id="3.40.190.10">
    <property type="entry name" value="Periplasmic binding protein-like II"/>
    <property type="match status" value="2"/>
</dbReference>
<dbReference type="InterPro" id="IPR001828">
    <property type="entry name" value="ANF_lig-bd_rcpt"/>
</dbReference>
<dbReference type="InterPro" id="IPR019594">
    <property type="entry name" value="Glu/Gly-bd"/>
</dbReference>
<dbReference type="InterPro" id="IPR001508">
    <property type="entry name" value="Iono_Glu_rcpt_met"/>
</dbReference>
<dbReference type="InterPro" id="IPR015683">
    <property type="entry name" value="Ionotropic_Glu_rcpt"/>
</dbReference>
<dbReference type="InterPro" id="IPR001320">
    <property type="entry name" value="Iontro_rcpt_C"/>
</dbReference>
<dbReference type="InterPro" id="IPR028082">
    <property type="entry name" value="Peripla_BP_I"/>
</dbReference>
<dbReference type="PANTHER" id="PTHR18966">
    <property type="entry name" value="IONOTROPIC GLUTAMATE RECEPTOR"/>
    <property type="match status" value="1"/>
</dbReference>
<dbReference type="Pfam" id="PF01094">
    <property type="entry name" value="ANF_receptor"/>
    <property type="match status" value="1"/>
</dbReference>
<dbReference type="Pfam" id="PF00060">
    <property type="entry name" value="Lig_chan"/>
    <property type="match status" value="1"/>
</dbReference>
<dbReference type="Pfam" id="PF10613">
    <property type="entry name" value="Lig_chan-Glu_bd"/>
    <property type="match status" value="1"/>
</dbReference>
<dbReference type="PRINTS" id="PR00177">
    <property type="entry name" value="NMDARECEPTOR"/>
</dbReference>
<dbReference type="SMART" id="SM00918">
    <property type="entry name" value="Lig_chan-Glu_bd"/>
    <property type="match status" value="1"/>
</dbReference>
<dbReference type="SMART" id="SM00079">
    <property type="entry name" value="PBPe"/>
    <property type="match status" value="1"/>
</dbReference>
<dbReference type="SUPFAM" id="SSF53822">
    <property type="entry name" value="Periplasmic binding protein-like I"/>
    <property type="match status" value="1"/>
</dbReference>
<dbReference type="SUPFAM" id="SSF53850">
    <property type="entry name" value="Periplasmic binding protein-like II"/>
    <property type="match status" value="1"/>
</dbReference>
<dbReference type="SUPFAM" id="SSF81324">
    <property type="entry name" value="Voltage-gated potassium channels"/>
    <property type="match status" value="1"/>
</dbReference>
<accession>Q38PU7</accession>
<organism>
    <name type="scientific">Macaca fascicularis</name>
    <name type="common">Crab-eating macaque</name>
    <name type="synonym">Cynomolgus monkey</name>
    <dbReference type="NCBI Taxonomy" id="9541"/>
    <lineage>
        <taxon>Eukaryota</taxon>
        <taxon>Metazoa</taxon>
        <taxon>Chordata</taxon>
        <taxon>Craniata</taxon>
        <taxon>Vertebrata</taxon>
        <taxon>Euteleostomi</taxon>
        <taxon>Mammalia</taxon>
        <taxon>Eutheria</taxon>
        <taxon>Euarchontoglires</taxon>
        <taxon>Primates</taxon>
        <taxon>Haplorrhini</taxon>
        <taxon>Catarrhini</taxon>
        <taxon>Cercopithecidae</taxon>
        <taxon>Cercopithecinae</taxon>
        <taxon>Macaca</taxon>
    </lineage>
</organism>
<evidence type="ECO:0000250" key="1"/>
<evidence type="ECO:0000250" key="2">
    <source>
        <dbReference type="UniProtKB" id="P19491"/>
    </source>
</evidence>
<evidence type="ECO:0000250" key="3">
    <source>
        <dbReference type="UniProtKB" id="P23819"/>
    </source>
</evidence>
<evidence type="ECO:0000250" key="4">
    <source>
        <dbReference type="UniProtKB" id="P42262"/>
    </source>
</evidence>
<evidence type="ECO:0000255" key="5"/>
<evidence type="ECO:0000305" key="6"/>
<feature type="signal peptide" evidence="5">
    <location>
        <begin position="1"/>
        <end position="24"/>
    </location>
</feature>
<feature type="chain" id="PRO_0000271753" description="Glutamate receptor 2">
    <location>
        <begin position="25"/>
        <end position="883"/>
    </location>
</feature>
<feature type="topological domain" description="Extracellular" evidence="1">
    <location>
        <begin position="25"/>
        <end position="543"/>
    </location>
</feature>
<feature type="transmembrane region" description="Helical" evidence="1">
    <location>
        <begin position="544"/>
        <end position="564"/>
    </location>
</feature>
<feature type="topological domain" description="Cytoplasmic" evidence="1">
    <location>
        <begin position="565"/>
        <end position="591"/>
    </location>
</feature>
<feature type="intramembrane region" description="Helical; Pore-forming" evidence="1">
    <location>
        <begin position="592"/>
        <end position="607"/>
    </location>
</feature>
<feature type="intramembrane region" evidence="1">
    <location>
        <begin position="608"/>
        <end position="610"/>
    </location>
</feature>
<feature type="topological domain" description="Cytoplasmic" evidence="1">
    <location>
        <begin position="611"/>
        <end position="616"/>
    </location>
</feature>
<feature type="transmembrane region" description="Helical" evidence="1">
    <location>
        <begin position="617"/>
        <end position="637"/>
    </location>
</feature>
<feature type="topological domain" description="Extracellular" evidence="1">
    <location>
        <begin position="638"/>
        <end position="812"/>
    </location>
</feature>
<feature type="transmembrane region" description="Helical; Name=M4" evidence="1">
    <location>
        <begin position="813"/>
        <end position="833"/>
    </location>
</feature>
<feature type="topological domain" description="Cytoplasmic" evidence="1">
    <location>
        <begin position="834"/>
        <end position="883"/>
    </location>
</feature>
<feature type="region of interest" description="Required for interaction with IQSEC1" evidence="2">
    <location>
        <begin position="867"/>
        <end position="877"/>
    </location>
</feature>
<feature type="binding site" evidence="4">
    <location>
        <position position="499"/>
    </location>
    <ligand>
        <name>L-glutamate</name>
        <dbReference type="ChEBI" id="CHEBI:29985"/>
    </ligand>
</feature>
<feature type="binding site" evidence="4">
    <location>
        <position position="501"/>
    </location>
    <ligand>
        <name>L-glutamate</name>
        <dbReference type="ChEBI" id="CHEBI:29985"/>
    </ligand>
</feature>
<feature type="binding site" evidence="4">
    <location>
        <position position="506"/>
    </location>
    <ligand>
        <name>L-glutamate</name>
        <dbReference type="ChEBI" id="CHEBI:29985"/>
    </ligand>
</feature>
<feature type="binding site" evidence="4">
    <location>
        <position position="675"/>
    </location>
    <ligand>
        <name>L-glutamate</name>
        <dbReference type="ChEBI" id="CHEBI:29985"/>
    </ligand>
</feature>
<feature type="binding site" evidence="4">
    <location>
        <position position="676"/>
    </location>
    <ligand>
        <name>L-glutamate</name>
        <dbReference type="ChEBI" id="CHEBI:29985"/>
    </ligand>
</feature>
<feature type="binding site" evidence="4">
    <location>
        <position position="726"/>
    </location>
    <ligand>
        <name>L-glutamate</name>
        <dbReference type="ChEBI" id="CHEBI:29985"/>
    </ligand>
</feature>
<feature type="modified residue" description="Phosphoserine; by PKC" evidence="2">
    <location>
        <position position="683"/>
    </location>
</feature>
<feature type="modified residue" description="Phosphoserine; by PKG" evidence="2">
    <location>
        <position position="717"/>
    </location>
</feature>
<feature type="modified residue" description="Phosphoserine" evidence="3">
    <location>
        <position position="860"/>
    </location>
</feature>
<feature type="modified residue" description="Phosphoserine" evidence="3">
    <location>
        <position position="863"/>
    </location>
</feature>
<feature type="modified residue" description="Phosphotyrosine" evidence="3">
    <location>
        <position position="876"/>
    </location>
</feature>
<feature type="modified residue" description="Phosphoserine" evidence="3">
    <location>
        <position position="880"/>
    </location>
</feature>
<feature type="lipid moiety-binding region" description="S-palmitoyl cysteine" evidence="1">
    <location>
        <position position="610"/>
    </location>
</feature>
<feature type="lipid moiety-binding region" description="S-palmitoyl cysteine" evidence="1">
    <location>
        <position position="836"/>
    </location>
</feature>
<feature type="glycosylation site" description="N-linked (GlcNAc...) asparagine" evidence="5">
    <location>
        <position position="256"/>
    </location>
</feature>
<feature type="glycosylation site" description="N-linked (GlcNAc...) asparagine" evidence="5">
    <location>
        <position position="370"/>
    </location>
</feature>
<feature type="glycosylation site" description="N-linked (GlcNAc...) asparagine" evidence="5">
    <location>
        <position position="406"/>
    </location>
</feature>
<feature type="glycosylation site" description="N-linked (GlcNAc...) asparagine" evidence="5">
    <location>
        <position position="413"/>
    </location>
</feature>
<feature type="disulfide bond" evidence="4">
    <location>
        <begin position="78"/>
        <end position="330"/>
    </location>
</feature>
<feature type="disulfide bond" evidence="2">
    <location>
        <begin position="739"/>
        <end position="794"/>
    </location>
</feature>
<name>GRIA2_MACFA</name>
<keyword id="KW-1003">Cell membrane</keyword>
<keyword id="KW-1015">Disulfide bond</keyword>
<keyword id="KW-0325">Glycoprotein</keyword>
<keyword id="KW-0407">Ion channel</keyword>
<keyword id="KW-0406">Ion transport</keyword>
<keyword id="KW-1071">Ligand-gated ion channel</keyword>
<keyword id="KW-0449">Lipoprotein</keyword>
<keyword id="KW-0472">Membrane</keyword>
<keyword id="KW-0564">Palmitate</keyword>
<keyword id="KW-0597">Phosphoprotein</keyword>
<keyword id="KW-0628">Postsynaptic cell membrane</keyword>
<keyword id="KW-0675">Receptor</keyword>
<keyword id="KW-1185">Reference proteome</keyword>
<keyword id="KW-0732">Signal</keyword>
<keyword id="KW-0770">Synapse</keyword>
<keyword id="KW-0812">Transmembrane</keyword>
<keyword id="KW-1133">Transmembrane helix</keyword>
<keyword id="KW-0813">Transport</keyword>
<keyword id="KW-0832">Ubl conjugation</keyword>